<gene>
    <name type="primary">AGD13</name>
    <name type="ordered locus">At4g05330</name>
    <name type="ORF">C6L9.10</name>
</gene>
<feature type="chain" id="PRO_0000352504" description="Probable ADP-ribosylation factor GTPase-activating protein AGD13">
    <location>
        <begin position="1"/>
        <end position="336"/>
    </location>
</feature>
<feature type="domain" description="Arf-GAP" evidence="3">
    <location>
        <begin position="15"/>
        <end position="137"/>
    </location>
</feature>
<feature type="domain" description="C2" evidence="2">
    <location>
        <begin position="162"/>
        <end position="280"/>
    </location>
</feature>
<feature type="zinc finger region" description="C4-type" evidence="3">
    <location>
        <begin position="30"/>
        <end position="53"/>
    </location>
</feature>
<feature type="binding site" evidence="2">
    <location>
        <position position="249"/>
    </location>
    <ligand>
        <name>Ca(2+)</name>
        <dbReference type="ChEBI" id="CHEBI:29108"/>
    </ligand>
</feature>
<feature type="binding site" evidence="2">
    <location>
        <position position="252"/>
    </location>
    <ligand>
        <name>Ca(2+)</name>
        <dbReference type="ChEBI" id="CHEBI:29108"/>
    </ligand>
</feature>
<feature type="binding site" evidence="2">
    <location>
        <position position="255"/>
    </location>
    <ligand>
        <name>Ca(2+)</name>
        <dbReference type="ChEBI" id="CHEBI:29108"/>
    </ligand>
</feature>
<comment type="function">
    <text evidence="1">GTPase-activating protein (GAP) for ADP ribosylation factor (ARF).</text>
</comment>
<comment type="cofactor">
    <cofactor evidence="2">
        <name>Ca(2+)</name>
        <dbReference type="ChEBI" id="CHEBI:29108"/>
    </cofactor>
</comment>
<comment type="sequence caution" evidence="4">
    <conflict type="erroneous gene model prediction">
        <sequence resource="EMBL-CDS" id="CAB81075"/>
    </conflict>
</comment>
<sequence>MSNYAAGLGKPGSGKRRIRDLLNQPDNRVCADCGASDPKWASANIGVFICLKCCGVHRSLGTHISKVLSVTLDEWSDEEVDSMIEIGGNASANSIYEAFLPDTCSKPGPDVNHDQRMRFIRAKYELQEFLKPSLRITSGKGSTKSSAFLTSSLSRKIMDSFRTNSSSQTMFQEGMVEFIGLLKVTIKKGTNLAIRDMMSSDPYVVLNLGKQKLQTTVMNSNLNPVWNQELMLSVPESYGPVKLQVYDYDTFSADDIMGEADIDIQPLITSAMAFGDPEMFGDMQIGKWLKSHDNPLIDDSIINIVDGKVKQEVQIKLQNVESGELELEMEWLPLDQ</sequence>
<accession>Q8LFN9</accession>
<accession>Q9M0W2</accession>
<protein>
    <recommendedName>
        <fullName>Probable ADP-ribosylation factor GTPase-activating protein AGD13</fullName>
        <shortName>ARF GAP AGD13</shortName>
    </recommendedName>
    <alternativeName>
        <fullName>Protein ARF-GAP DOMAIN 13</fullName>
        <shortName>AtAGD13</shortName>
    </alternativeName>
</protein>
<proteinExistence type="evidence at transcript level"/>
<dbReference type="EMBL" id="AL161503">
    <property type="protein sequence ID" value="CAB81075.1"/>
    <property type="status" value="ALT_SEQ"/>
    <property type="molecule type" value="Genomic_DNA"/>
</dbReference>
<dbReference type="EMBL" id="CP002687">
    <property type="protein sequence ID" value="AEE82506.1"/>
    <property type="molecule type" value="Genomic_DNA"/>
</dbReference>
<dbReference type="EMBL" id="CP002687">
    <property type="protein sequence ID" value="ANM66129.1"/>
    <property type="molecule type" value="Genomic_DNA"/>
</dbReference>
<dbReference type="EMBL" id="AY084733">
    <property type="protein sequence ID" value="AAM61306.1"/>
    <property type="molecule type" value="mRNA"/>
</dbReference>
<dbReference type="EMBL" id="BT024733">
    <property type="protein sequence ID" value="ABD59071.1"/>
    <property type="molecule type" value="mRNA"/>
</dbReference>
<dbReference type="PIR" id="A85067">
    <property type="entry name" value="A85067"/>
</dbReference>
<dbReference type="RefSeq" id="NP_001328044.1">
    <property type="nucleotide sequence ID" value="NM_001340549.1"/>
</dbReference>
<dbReference type="RefSeq" id="NP_567292.1">
    <property type="nucleotide sequence ID" value="NM_116772.4"/>
</dbReference>
<dbReference type="SMR" id="Q8LFN9"/>
<dbReference type="FunCoup" id="Q8LFN9">
    <property type="interactions" value="175"/>
</dbReference>
<dbReference type="STRING" id="3702.Q8LFN9"/>
<dbReference type="iPTMnet" id="Q8LFN9"/>
<dbReference type="PaxDb" id="3702-AT4G05330.1"/>
<dbReference type="ProteomicsDB" id="244876"/>
<dbReference type="EnsemblPlants" id="AT4G05330.1">
    <property type="protein sequence ID" value="AT4G05330.1"/>
    <property type="gene ID" value="AT4G05330"/>
</dbReference>
<dbReference type="EnsemblPlants" id="AT4G05330.3">
    <property type="protein sequence ID" value="AT4G05330.3"/>
    <property type="gene ID" value="AT4G05330"/>
</dbReference>
<dbReference type="GeneID" id="825881"/>
<dbReference type="Gramene" id="AT4G05330.1">
    <property type="protein sequence ID" value="AT4G05330.1"/>
    <property type="gene ID" value="AT4G05330"/>
</dbReference>
<dbReference type="Gramene" id="AT4G05330.3">
    <property type="protein sequence ID" value="AT4G05330.3"/>
    <property type="gene ID" value="AT4G05330"/>
</dbReference>
<dbReference type="KEGG" id="ath:AT4G05330"/>
<dbReference type="Araport" id="AT4G05330"/>
<dbReference type="TAIR" id="AT4G05330">
    <property type="gene designation" value="AGD13"/>
</dbReference>
<dbReference type="eggNOG" id="KOG0703">
    <property type="taxonomic scope" value="Eukaryota"/>
</dbReference>
<dbReference type="eggNOG" id="KOG1030">
    <property type="taxonomic scope" value="Eukaryota"/>
</dbReference>
<dbReference type="HOGENOM" id="CLU_045472_0_1_1"/>
<dbReference type="InParanoid" id="Q8LFN9"/>
<dbReference type="OMA" id="WNVELML"/>
<dbReference type="PhylomeDB" id="Q8LFN9"/>
<dbReference type="PRO" id="PR:Q8LFN9"/>
<dbReference type="Proteomes" id="UP000006548">
    <property type="component" value="Chromosome 4"/>
</dbReference>
<dbReference type="ExpressionAtlas" id="Q8LFN9">
    <property type="expression patterns" value="baseline and differential"/>
</dbReference>
<dbReference type="GO" id="GO:0005096">
    <property type="term" value="F:GTPase activator activity"/>
    <property type="evidence" value="ECO:0007669"/>
    <property type="project" value="UniProtKB-KW"/>
</dbReference>
<dbReference type="GO" id="GO:0005543">
    <property type="term" value="F:phospholipid binding"/>
    <property type="evidence" value="ECO:0007669"/>
    <property type="project" value="InterPro"/>
</dbReference>
<dbReference type="GO" id="GO:0008270">
    <property type="term" value="F:zinc ion binding"/>
    <property type="evidence" value="ECO:0007669"/>
    <property type="project" value="UniProtKB-KW"/>
</dbReference>
<dbReference type="GO" id="GO:0009555">
    <property type="term" value="P:pollen development"/>
    <property type="evidence" value="ECO:0000315"/>
    <property type="project" value="TAIR"/>
</dbReference>
<dbReference type="CDD" id="cd08204">
    <property type="entry name" value="ArfGap"/>
    <property type="match status" value="1"/>
</dbReference>
<dbReference type="CDD" id="cd04038">
    <property type="entry name" value="C2_ArfGAP"/>
    <property type="match status" value="1"/>
</dbReference>
<dbReference type="FunFam" id="2.60.40.150:FF:000190">
    <property type="entry name" value="ADP-ribosylation factor GTPase-activating protein AGD12"/>
    <property type="match status" value="1"/>
</dbReference>
<dbReference type="FunFam" id="1.10.220.150:FF:000011">
    <property type="entry name" value="Arf-GAP with dual PH domain-containing protein 1"/>
    <property type="match status" value="1"/>
</dbReference>
<dbReference type="Gene3D" id="1.10.220.150">
    <property type="entry name" value="Arf GTPase activating protein"/>
    <property type="match status" value="1"/>
</dbReference>
<dbReference type="Gene3D" id="2.60.40.150">
    <property type="entry name" value="C2 domain"/>
    <property type="match status" value="1"/>
</dbReference>
<dbReference type="InterPro" id="IPR044518">
    <property type="entry name" value="ARF_GAP_AGD11/12/13"/>
</dbReference>
<dbReference type="InterPro" id="IPR037278">
    <property type="entry name" value="ARFGAP/RecO"/>
</dbReference>
<dbReference type="InterPro" id="IPR001164">
    <property type="entry name" value="ArfGAP_dom"/>
</dbReference>
<dbReference type="InterPro" id="IPR038508">
    <property type="entry name" value="ArfGAP_dom_sf"/>
</dbReference>
<dbReference type="InterPro" id="IPR000008">
    <property type="entry name" value="C2_dom"/>
</dbReference>
<dbReference type="InterPro" id="IPR035892">
    <property type="entry name" value="C2_domain_sf"/>
</dbReference>
<dbReference type="PANTHER" id="PTHR46220">
    <property type="entry name" value="ADP-RIBOSYLATION FACTOR GTPASE-ACTIVATING PROTEIN AGD12"/>
    <property type="match status" value="1"/>
</dbReference>
<dbReference type="PANTHER" id="PTHR46220:SF5">
    <property type="entry name" value="ADP-RIBOSYLATION FACTOR GTPASE-ACTIVATING PROTEIN AGD13-RELATED"/>
    <property type="match status" value="1"/>
</dbReference>
<dbReference type="Pfam" id="PF01412">
    <property type="entry name" value="ArfGap"/>
    <property type="match status" value="1"/>
</dbReference>
<dbReference type="Pfam" id="PF00168">
    <property type="entry name" value="C2"/>
    <property type="match status" value="1"/>
</dbReference>
<dbReference type="PRINTS" id="PR00405">
    <property type="entry name" value="REVINTRACTNG"/>
</dbReference>
<dbReference type="SMART" id="SM00105">
    <property type="entry name" value="ArfGap"/>
    <property type="match status" value="1"/>
</dbReference>
<dbReference type="SMART" id="SM00239">
    <property type="entry name" value="C2"/>
    <property type="match status" value="1"/>
</dbReference>
<dbReference type="SUPFAM" id="SSF57863">
    <property type="entry name" value="ArfGap/RecO-like zinc finger"/>
    <property type="match status" value="1"/>
</dbReference>
<dbReference type="SUPFAM" id="SSF49562">
    <property type="entry name" value="C2 domain (Calcium/lipid-binding domain, CaLB)"/>
    <property type="match status" value="1"/>
</dbReference>
<dbReference type="PROSITE" id="PS50115">
    <property type="entry name" value="ARFGAP"/>
    <property type="match status" value="1"/>
</dbReference>
<dbReference type="PROSITE" id="PS50004">
    <property type="entry name" value="C2"/>
    <property type="match status" value="1"/>
</dbReference>
<name>AGD13_ARATH</name>
<keyword id="KW-0106">Calcium</keyword>
<keyword id="KW-0343">GTPase activation</keyword>
<keyword id="KW-0479">Metal-binding</keyword>
<keyword id="KW-1185">Reference proteome</keyword>
<keyword id="KW-0862">Zinc</keyword>
<keyword id="KW-0863">Zinc-finger</keyword>
<organism>
    <name type="scientific">Arabidopsis thaliana</name>
    <name type="common">Mouse-ear cress</name>
    <dbReference type="NCBI Taxonomy" id="3702"/>
    <lineage>
        <taxon>Eukaryota</taxon>
        <taxon>Viridiplantae</taxon>
        <taxon>Streptophyta</taxon>
        <taxon>Embryophyta</taxon>
        <taxon>Tracheophyta</taxon>
        <taxon>Spermatophyta</taxon>
        <taxon>Magnoliopsida</taxon>
        <taxon>eudicotyledons</taxon>
        <taxon>Gunneridae</taxon>
        <taxon>Pentapetalae</taxon>
        <taxon>rosids</taxon>
        <taxon>malvids</taxon>
        <taxon>Brassicales</taxon>
        <taxon>Brassicaceae</taxon>
        <taxon>Camelineae</taxon>
        <taxon>Arabidopsis</taxon>
    </lineage>
</organism>
<evidence type="ECO:0000250" key="1"/>
<evidence type="ECO:0000255" key="2">
    <source>
        <dbReference type="PROSITE-ProRule" id="PRU00041"/>
    </source>
</evidence>
<evidence type="ECO:0000255" key="3">
    <source>
        <dbReference type="PROSITE-ProRule" id="PRU00288"/>
    </source>
</evidence>
<evidence type="ECO:0000305" key="4"/>
<reference key="1">
    <citation type="journal article" date="1999" name="Nature">
        <title>Sequence and analysis of chromosome 4 of the plant Arabidopsis thaliana.</title>
        <authorList>
            <person name="Mayer K.F.X."/>
            <person name="Schueller C."/>
            <person name="Wambutt R."/>
            <person name="Murphy G."/>
            <person name="Volckaert G."/>
            <person name="Pohl T."/>
            <person name="Duesterhoeft A."/>
            <person name="Stiekema W."/>
            <person name="Entian K.-D."/>
            <person name="Terryn N."/>
            <person name="Harris B."/>
            <person name="Ansorge W."/>
            <person name="Brandt P."/>
            <person name="Grivell L.A."/>
            <person name="Rieger M."/>
            <person name="Weichselgartner M."/>
            <person name="de Simone V."/>
            <person name="Obermaier B."/>
            <person name="Mache R."/>
            <person name="Mueller M."/>
            <person name="Kreis M."/>
            <person name="Delseny M."/>
            <person name="Puigdomenech P."/>
            <person name="Watson M."/>
            <person name="Schmidtheini T."/>
            <person name="Reichert B."/>
            <person name="Portetelle D."/>
            <person name="Perez-Alonso M."/>
            <person name="Boutry M."/>
            <person name="Bancroft I."/>
            <person name="Vos P."/>
            <person name="Hoheisel J."/>
            <person name="Zimmermann W."/>
            <person name="Wedler H."/>
            <person name="Ridley P."/>
            <person name="Langham S.-A."/>
            <person name="McCullagh B."/>
            <person name="Bilham L."/>
            <person name="Robben J."/>
            <person name="van der Schueren J."/>
            <person name="Grymonprez B."/>
            <person name="Chuang Y.-J."/>
            <person name="Vandenbussche F."/>
            <person name="Braeken M."/>
            <person name="Weltjens I."/>
            <person name="Voet M."/>
            <person name="Bastiaens I."/>
            <person name="Aert R."/>
            <person name="Defoor E."/>
            <person name="Weitzenegger T."/>
            <person name="Bothe G."/>
            <person name="Ramsperger U."/>
            <person name="Hilbert H."/>
            <person name="Braun M."/>
            <person name="Holzer E."/>
            <person name="Brandt A."/>
            <person name="Peters S."/>
            <person name="van Staveren M."/>
            <person name="Dirkse W."/>
            <person name="Mooijman P."/>
            <person name="Klein Lankhorst R."/>
            <person name="Rose M."/>
            <person name="Hauf J."/>
            <person name="Koetter P."/>
            <person name="Berneiser S."/>
            <person name="Hempel S."/>
            <person name="Feldpausch M."/>
            <person name="Lamberth S."/>
            <person name="Van den Daele H."/>
            <person name="De Keyser A."/>
            <person name="Buysshaert C."/>
            <person name="Gielen J."/>
            <person name="Villarroel R."/>
            <person name="De Clercq R."/>
            <person name="van Montagu M."/>
            <person name="Rogers J."/>
            <person name="Cronin A."/>
            <person name="Quail M.A."/>
            <person name="Bray-Allen S."/>
            <person name="Clark L."/>
            <person name="Doggett J."/>
            <person name="Hall S."/>
            <person name="Kay M."/>
            <person name="Lennard N."/>
            <person name="McLay K."/>
            <person name="Mayes R."/>
            <person name="Pettett A."/>
            <person name="Rajandream M.A."/>
            <person name="Lyne M."/>
            <person name="Benes V."/>
            <person name="Rechmann S."/>
            <person name="Borkova D."/>
            <person name="Bloecker H."/>
            <person name="Scharfe M."/>
            <person name="Grimm M."/>
            <person name="Loehnert T.-H."/>
            <person name="Dose S."/>
            <person name="de Haan M."/>
            <person name="Maarse A.C."/>
            <person name="Schaefer M."/>
            <person name="Mueller-Auer S."/>
            <person name="Gabel C."/>
            <person name="Fuchs M."/>
            <person name="Fartmann B."/>
            <person name="Granderath K."/>
            <person name="Dauner D."/>
            <person name="Herzl A."/>
            <person name="Neumann S."/>
            <person name="Argiriou A."/>
            <person name="Vitale D."/>
            <person name="Liguori R."/>
            <person name="Piravandi E."/>
            <person name="Massenet O."/>
            <person name="Quigley F."/>
            <person name="Clabauld G."/>
            <person name="Muendlein A."/>
            <person name="Felber R."/>
            <person name="Schnabl S."/>
            <person name="Hiller R."/>
            <person name="Schmidt W."/>
            <person name="Lecharny A."/>
            <person name="Aubourg S."/>
            <person name="Chefdor F."/>
            <person name="Cooke R."/>
            <person name="Berger C."/>
            <person name="Monfort A."/>
            <person name="Casacuberta E."/>
            <person name="Gibbons T."/>
            <person name="Weber N."/>
            <person name="Vandenbol M."/>
            <person name="Bargues M."/>
            <person name="Terol J."/>
            <person name="Torres A."/>
            <person name="Perez-Perez A."/>
            <person name="Purnelle B."/>
            <person name="Bent E."/>
            <person name="Johnson S."/>
            <person name="Tacon D."/>
            <person name="Jesse T."/>
            <person name="Heijnen L."/>
            <person name="Schwarz S."/>
            <person name="Scholler P."/>
            <person name="Heber S."/>
            <person name="Francs P."/>
            <person name="Bielke C."/>
            <person name="Frishman D."/>
            <person name="Haase D."/>
            <person name="Lemcke K."/>
            <person name="Mewes H.-W."/>
            <person name="Stocker S."/>
            <person name="Zaccaria P."/>
            <person name="Bevan M."/>
            <person name="Wilson R.K."/>
            <person name="de la Bastide M."/>
            <person name="Habermann K."/>
            <person name="Parnell L."/>
            <person name="Dedhia N."/>
            <person name="Gnoj L."/>
            <person name="Schutz K."/>
            <person name="Huang E."/>
            <person name="Spiegel L."/>
            <person name="Sekhon M."/>
            <person name="Murray J."/>
            <person name="Sheet P."/>
            <person name="Cordes M."/>
            <person name="Abu-Threideh J."/>
            <person name="Stoneking T."/>
            <person name="Kalicki J."/>
            <person name="Graves T."/>
            <person name="Harmon G."/>
            <person name="Edwards J."/>
            <person name="Latreille P."/>
            <person name="Courtney L."/>
            <person name="Cloud J."/>
            <person name="Abbott A."/>
            <person name="Scott K."/>
            <person name="Johnson D."/>
            <person name="Minx P."/>
            <person name="Bentley D."/>
            <person name="Fulton B."/>
            <person name="Miller N."/>
            <person name="Greco T."/>
            <person name="Kemp K."/>
            <person name="Kramer J."/>
            <person name="Fulton L."/>
            <person name="Mardis E."/>
            <person name="Dante M."/>
            <person name="Pepin K."/>
            <person name="Hillier L.W."/>
            <person name="Nelson J."/>
            <person name="Spieth J."/>
            <person name="Ryan E."/>
            <person name="Andrews S."/>
            <person name="Geisel C."/>
            <person name="Layman D."/>
            <person name="Du H."/>
            <person name="Ali J."/>
            <person name="Berghoff A."/>
            <person name="Jones K."/>
            <person name="Drone K."/>
            <person name="Cotton M."/>
            <person name="Joshu C."/>
            <person name="Antonoiu B."/>
            <person name="Zidanic M."/>
            <person name="Strong C."/>
            <person name="Sun H."/>
            <person name="Lamar B."/>
            <person name="Yordan C."/>
            <person name="Ma P."/>
            <person name="Zhong J."/>
            <person name="Preston R."/>
            <person name="Vil D."/>
            <person name="Shekher M."/>
            <person name="Matero A."/>
            <person name="Shah R."/>
            <person name="Swaby I.K."/>
            <person name="O'Shaughnessy A."/>
            <person name="Rodriguez M."/>
            <person name="Hoffman J."/>
            <person name="Till S."/>
            <person name="Granat S."/>
            <person name="Shohdy N."/>
            <person name="Hasegawa A."/>
            <person name="Hameed A."/>
            <person name="Lodhi M."/>
            <person name="Johnson A."/>
            <person name="Chen E."/>
            <person name="Marra M.A."/>
            <person name="Martienssen R."/>
            <person name="McCombie W.R."/>
        </authorList>
    </citation>
    <scope>NUCLEOTIDE SEQUENCE [LARGE SCALE GENOMIC DNA]</scope>
    <source>
        <strain>cv. Columbia</strain>
    </source>
</reference>
<reference key="2">
    <citation type="journal article" date="2017" name="Plant J.">
        <title>Araport11: a complete reannotation of the Arabidopsis thaliana reference genome.</title>
        <authorList>
            <person name="Cheng C.Y."/>
            <person name="Krishnakumar V."/>
            <person name="Chan A.P."/>
            <person name="Thibaud-Nissen F."/>
            <person name="Schobel S."/>
            <person name="Town C.D."/>
        </authorList>
    </citation>
    <scope>GENOME REANNOTATION</scope>
    <source>
        <strain>cv. Columbia</strain>
    </source>
</reference>
<reference key="3">
    <citation type="submission" date="2002-03" db="EMBL/GenBank/DDBJ databases">
        <title>Full-length cDNA from Arabidopsis thaliana.</title>
        <authorList>
            <person name="Brover V.V."/>
            <person name="Troukhan M.E."/>
            <person name="Alexandrov N.A."/>
            <person name="Lu Y.-P."/>
            <person name="Flavell R.B."/>
            <person name="Feldmann K.A."/>
        </authorList>
    </citation>
    <scope>NUCLEOTIDE SEQUENCE [LARGE SCALE MRNA]</scope>
</reference>
<reference key="4">
    <citation type="submission" date="2006-03" db="EMBL/GenBank/DDBJ databases">
        <title>Arabidopsis ORF clones.</title>
        <authorList>
            <person name="Shinn P."/>
            <person name="Chen H."/>
            <person name="Kim C.J."/>
            <person name="Ecker J.R."/>
        </authorList>
    </citation>
    <scope>NUCLEOTIDE SEQUENCE [LARGE SCALE MRNA]</scope>
    <source>
        <strain>cv. Columbia</strain>
    </source>
</reference>
<reference key="5">
    <citation type="journal article" date="2003" name="Plant Physiol.">
        <title>Analysis of the small GTPase gene superfamily of Arabidopsis.</title>
        <authorList>
            <person name="Vernoud V."/>
            <person name="Horton A.C."/>
            <person name="Yang Z."/>
            <person name="Nielsen E."/>
        </authorList>
    </citation>
    <scope>GENE FAMILY</scope>
    <scope>NOMENCLATURE</scope>
</reference>